<feature type="signal peptide" evidence="3">
    <location>
        <begin position="1"/>
        <end position="17"/>
    </location>
</feature>
<feature type="chain" id="PRO_0000008811" description="Riboflavin-binding protein, plasma form">
    <location>
        <begin position="18"/>
        <end position="238"/>
    </location>
</feature>
<feature type="chain" id="PRO_0000008812" description="Riboflavin-binding protein, yolk minor form">
    <location>
        <begin position="18"/>
        <end position="225"/>
    </location>
</feature>
<feature type="chain" id="PRO_0000008813" description="Riboflavin-binding protein, yolk major form">
    <location>
        <begin position="18"/>
        <end position="223"/>
    </location>
</feature>
<feature type="modified residue" description="Pyrrolidone carboxylic acid" evidence="3">
    <location>
        <position position="18"/>
    </location>
</feature>
<feature type="modified residue" description="Phosphoserine" evidence="2">
    <location>
        <position position="204"/>
    </location>
</feature>
<feature type="modified residue" description="Phosphoserine" evidence="2">
    <location>
        <position position="205"/>
    </location>
</feature>
<feature type="modified residue" description="Phosphoserine" evidence="2">
    <location>
        <position position="208"/>
    </location>
</feature>
<feature type="modified residue" description="Phosphoserine" evidence="2">
    <location>
        <position position="209"/>
    </location>
</feature>
<feature type="modified residue" description="Phosphoserine" evidence="2">
    <location>
        <position position="210"/>
    </location>
</feature>
<feature type="modified residue" description="Phosphoserine" evidence="3">
    <location>
        <position position="212"/>
    </location>
</feature>
<feature type="modified residue" description="Phosphoserine" evidence="3">
    <location>
        <position position="213"/>
    </location>
</feature>
<feature type="modified residue" description="Phosphoserine" evidence="3">
    <location>
        <position position="214"/>
    </location>
</feature>
<feature type="glycosylation site" id="CAR_000059" description="N-linked (GlcNAc...) asparagine">
    <location>
        <position position="53"/>
    </location>
</feature>
<feature type="glycosylation site" id="CAR_000060" description="N-linked (GlcNAc...) asparagine">
    <location>
        <position position="164"/>
    </location>
</feature>
<feature type="disulfide bond" description="Or C-22 with C-50" evidence="1">
    <location>
        <begin position="22"/>
        <end position="49"/>
    </location>
</feature>
<feature type="disulfide bond" evidence="1">
    <location>
        <begin position="41"/>
        <end position="90"/>
    </location>
</feature>
<feature type="disulfide bond" description="Or C-49 with C-94" evidence="1">
    <location>
        <begin position="50"/>
        <end position="94"/>
    </location>
</feature>
<feature type="disulfide bond" evidence="1">
    <location>
        <begin position="74"/>
        <end position="155"/>
    </location>
</feature>
<feature type="disulfide bond" evidence="1">
    <location>
        <begin position="81"/>
        <end position="127"/>
    </location>
</feature>
<feature type="disulfide bond" evidence="1">
    <location>
        <begin position="116"/>
        <end position="186"/>
    </location>
</feature>
<feature type="disulfide bond" evidence="1">
    <location>
        <begin position="120"/>
        <end position="169"/>
    </location>
</feature>
<feature type="disulfide bond" evidence="1">
    <location>
        <begin position="133"/>
        <end position="151"/>
    </location>
</feature>
<feature type="disulfide bond" evidence="1">
    <location>
        <begin position="184"/>
        <end position="219"/>
    </location>
</feature>
<feature type="sequence variant" description="In 30% of egg-white and yolk.">
    <original>N</original>
    <variation>K</variation>
    <location>
        <position position="31"/>
    </location>
</feature>
<feature type="strand" evidence="5">
    <location>
        <begin position="25"/>
        <end position="27"/>
    </location>
</feature>
<feature type="helix" evidence="5">
    <location>
        <begin position="42"/>
        <end position="44"/>
    </location>
</feature>
<feature type="strand" evidence="5">
    <location>
        <begin position="47"/>
        <end position="50"/>
    </location>
</feature>
<feature type="helix" evidence="5">
    <location>
        <begin position="52"/>
        <end position="56"/>
    </location>
</feature>
<feature type="strand" evidence="5">
    <location>
        <begin position="59"/>
        <end position="62"/>
    </location>
</feature>
<feature type="strand" evidence="5">
    <location>
        <begin position="69"/>
        <end position="71"/>
    </location>
</feature>
<feature type="helix" evidence="5">
    <location>
        <begin position="79"/>
        <end position="94"/>
    </location>
</feature>
<feature type="helix" evidence="5">
    <location>
        <begin position="98"/>
        <end position="101"/>
    </location>
</feature>
<feature type="strand" evidence="5">
    <location>
        <begin position="106"/>
        <end position="110"/>
    </location>
</feature>
<feature type="strand" evidence="5">
    <location>
        <begin position="113"/>
        <end position="115"/>
    </location>
</feature>
<feature type="helix" evidence="5">
    <location>
        <begin position="117"/>
        <end position="127"/>
    </location>
</feature>
<feature type="strand" evidence="5">
    <location>
        <begin position="130"/>
        <end position="133"/>
    </location>
</feature>
<feature type="turn" evidence="5">
    <location>
        <begin position="137"/>
        <end position="139"/>
    </location>
</feature>
<feature type="strand" evidence="5">
    <location>
        <begin position="140"/>
        <end position="143"/>
    </location>
</feature>
<feature type="strand" evidence="5">
    <location>
        <begin position="149"/>
        <end position="151"/>
    </location>
</feature>
<feature type="helix" evidence="5">
    <location>
        <begin position="158"/>
        <end position="161"/>
    </location>
</feature>
<feature type="helix" evidence="5">
    <location>
        <begin position="165"/>
        <end position="171"/>
    </location>
</feature>
<feature type="helix" evidence="5">
    <location>
        <begin position="174"/>
        <end position="176"/>
    </location>
</feature>
<feature type="strand" evidence="5">
    <location>
        <begin position="177"/>
        <end position="179"/>
    </location>
</feature>
<feature type="strand" evidence="5">
    <location>
        <begin position="183"/>
        <end position="187"/>
    </location>
</feature>
<feature type="helix" evidence="5">
    <location>
        <begin position="193"/>
        <end position="200"/>
    </location>
</feature>
<feature type="helix" evidence="5">
    <location>
        <begin position="214"/>
        <end position="229"/>
    </location>
</feature>
<reference key="1">
    <citation type="journal article" date="1988" name="J. Biol. Chem.">
        <title>Chicken riboflavin-binding protein. cDNA sequence and homology with milk folate-binding protein.</title>
        <authorList>
            <person name="Zheng D.B."/>
            <person name="Lim H.M."/>
            <person name="Pene J.J."/>
            <person name="White H.B. III"/>
        </authorList>
    </citation>
    <scope>NUCLEOTIDE SEQUENCE [MRNA]</scope>
</reference>
<reference key="2">
    <citation type="journal article" date="1993" name="J. Biol. Chem.">
        <title>Riboflavinuria in the rd chicken. 5'-splice site mutation in the gene for riboflavin-binding protein.</title>
        <authorList>
            <person name="MacLachlan I."/>
            <person name="Nimpf J."/>
            <person name="White H.B. III"/>
            <person name="Schneider W.J."/>
        </authorList>
    </citation>
    <scope>NUCLEOTIDE SEQUENCE [MRNA]</scope>
</reference>
<reference key="3">
    <citation type="journal article" date="1984" name="J. Biochem.">
        <title>Characterization of hen egg white- and yolk-riboflavin binding proteins and amino acid sequence of egg white-riboflavin binding protein.</title>
        <authorList>
            <person name="Hamazume Y."/>
            <person name="Mega T."/>
            <person name="Ikenaka T."/>
        </authorList>
    </citation>
    <scope>PROTEIN SEQUENCE OF 18-236</scope>
    <scope>PYROGLUTAMATE FORMATION AT GLN-18</scope>
    <scope>PHOSPHORYLATION AT SER-212; SER-213 AND SER-214</scope>
    <source>
        <strain>White leghorn</strain>
        <tissue>Egg white</tissue>
    </source>
</reference>
<reference key="4">
    <citation type="journal article" date="1985" name="J. Biochem.">
        <title>Comparison of the amino acid sequences of hen plasma-, yolk-, and white-riboflavin binding proteins.</title>
        <authorList>
            <person name="Norioka N."/>
            <person name="Okada T."/>
            <person name="Hamazume Y."/>
            <person name="Mega T."/>
            <person name="Ikenaka T."/>
        </authorList>
    </citation>
    <scope>PROTEIN SEQUENCE</scope>
    <source>
        <strain>White leghorn</strain>
        <tissue>Yolk</tissue>
    </source>
</reference>
<reference key="5">
    <citation type="journal article" date="1987" name="J. Biochem.">
        <title>Positions of disulfide bonds in riboflavin-binding protein of hen egg white.</title>
        <authorList>
            <person name="Hamazume Y."/>
            <person name="Mega T."/>
            <person name="Ikenaka T."/>
        </authorList>
    </citation>
    <scope>DISULFIDE BONDS</scope>
    <source>
        <tissue>Egg white</tissue>
    </source>
</reference>
<reference key="6">
    <citation type="journal article" date="1992" name="Biochem. J.">
        <title>Separation and characterization of the two Asn-linked glycosylation sites of chicken serum riboflavin-binding protein. Glycosylation differences despite similarity of primary structure.</title>
        <authorList>
            <person name="Rohrer J.S."/>
            <person name="White H.B. III"/>
        </authorList>
    </citation>
    <scope>STRUCTURE OF CARBOHYDRATES</scope>
</reference>
<reference key="7">
    <citation type="journal article" date="1985" name="Anal. Biochem.">
        <title>Phosphorylation sites in riboflavin-binding protein characterized by fast atom bombardment mass spectrometry.</title>
        <authorList>
            <person name="Fenselau C."/>
            <person name="Heller D.N."/>
            <person name="Miller M.S."/>
            <person name="White H.B. III"/>
        </authorList>
    </citation>
    <scope>PHOSPHORYLATION AT SER-204; SER-205; SER-208; SER-209 AND SER-210</scope>
</reference>
<dbReference type="EMBL" id="J03922">
    <property type="protein sequence ID" value="AAA49056.1"/>
    <property type="molecule type" value="mRNA"/>
</dbReference>
<dbReference type="EMBL" id="X74247">
    <property type="protein sequence ID" value="CAD44564.1"/>
    <property type="status" value="ALT_INIT"/>
    <property type="molecule type" value="mRNA"/>
</dbReference>
<dbReference type="PIR" id="A29228">
    <property type="entry name" value="VOCH"/>
</dbReference>
<dbReference type="RefSeq" id="NP_990794.1">
    <property type="nucleotide sequence ID" value="NM_205463.2"/>
</dbReference>
<dbReference type="RefSeq" id="XP_015146458.1">
    <property type="nucleotide sequence ID" value="XM_015290972.1"/>
</dbReference>
<dbReference type="PDB" id="6HCE">
    <property type="method" value="X-ray"/>
    <property type="resolution" value="2.50 A"/>
    <property type="chains" value="A=1-238"/>
</dbReference>
<dbReference type="PDBsum" id="6HCE"/>
<dbReference type="SMR" id="P02752"/>
<dbReference type="FunCoup" id="P02752">
    <property type="interactions" value="126"/>
</dbReference>
<dbReference type="STRING" id="9031.ENSGALP00000037592"/>
<dbReference type="BindingDB" id="P02752"/>
<dbReference type="ChEMBL" id="CHEMBL1944489"/>
<dbReference type="DrugCentral" id="P02752"/>
<dbReference type="Allergome" id="10114">
    <property type="allergen name" value="Gal d RfBP"/>
</dbReference>
<dbReference type="GlyConnect" id="527">
    <property type="glycosylation" value="42 N-Linked glycans (2 sites)"/>
</dbReference>
<dbReference type="GlyGen" id="P02752">
    <property type="glycosylation" value="3 sites, 72 N-linked glycans (3 sites)"/>
</dbReference>
<dbReference type="iPTMnet" id="P02752"/>
<dbReference type="PaxDb" id="9031-ENSGALP00000037592"/>
<dbReference type="GeneID" id="396449"/>
<dbReference type="KEGG" id="gga:396449"/>
<dbReference type="CTD" id="41880"/>
<dbReference type="VEuPathDB" id="HostDB:geneid_396449"/>
<dbReference type="eggNOG" id="ENOG502RYYP">
    <property type="taxonomic scope" value="Eukaryota"/>
</dbReference>
<dbReference type="HOGENOM" id="CLU_070826_2_0_1"/>
<dbReference type="InParanoid" id="P02752"/>
<dbReference type="OrthoDB" id="5982417at2759"/>
<dbReference type="PhylomeDB" id="P02752"/>
<dbReference type="TreeFam" id="TF328532"/>
<dbReference type="PRO" id="PR:P02752"/>
<dbReference type="Proteomes" id="UP000000539">
    <property type="component" value="Unassembled WGS sequence"/>
</dbReference>
<dbReference type="GO" id="GO:0009897">
    <property type="term" value="C:external side of plasma membrane"/>
    <property type="evidence" value="ECO:0000318"/>
    <property type="project" value="GO_Central"/>
</dbReference>
<dbReference type="GO" id="GO:1902444">
    <property type="term" value="F:riboflavin binding"/>
    <property type="evidence" value="ECO:0000314"/>
    <property type="project" value="AgBase"/>
</dbReference>
<dbReference type="GO" id="GO:0032217">
    <property type="term" value="F:riboflavin transmembrane transporter activity"/>
    <property type="evidence" value="ECO:0000314"/>
    <property type="project" value="UniProtKB"/>
</dbReference>
<dbReference type="GO" id="GO:0038023">
    <property type="term" value="F:signaling receptor activity"/>
    <property type="evidence" value="ECO:0000318"/>
    <property type="project" value="GO_Central"/>
</dbReference>
<dbReference type="GO" id="GO:1904661">
    <property type="term" value="P:negative regulation of sensory perception of bitter taste"/>
    <property type="evidence" value="ECO:0000315"/>
    <property type="project" value="AgBase"/>
</dbReference>
<dbReference type="GO" id="GO:1904657">
    <property type="term" value="P:negative regulation of sensory perception of sweet taste"/>
    <property type="evidence" value="ECO:0000315"/>
    <property type="project" value="AgBase"/>
</dbReference>
<dbReference type="GO" id="GO:0032218">
    <property type="term" value="P:riboflavin transport"/>
    <property type="evidence" value="ECO:0000314"/>
    <property type="project" value="UniProtKB"/>
</dbReference>
<dbReference type="InterPro" id="IPR004269">
    <property type="entry name" value="Folate_rcpt"/>
</dbReference>
<dbReference type="InterPro" id="IPR018143">
    <property type="entry name" value="Folate_rcpt-like"/>
</dbReference>
<dbReference type="PANTHER" id="PTHR10517">
    <property type="entry name" value="FOLATE RECEPTOR"/>
    <property type="match status" value="1"/>
</dbReference>
<dbReference type="PANTHER" id="PTHR10517:SF19">
    <property type="entry name" value="RETBINDIN"/>
    <property type="match status" value="1"/>
</dbReference>
<dbReference type="Pfam" id="PF03024">
    <property type="entry name" value="Folate_rec"/>
    <property type="match status" value="1"/>
</dbReference>
<organism>
    <name type="scientific">Gallus gallus</name>
    <name type="common">Chicken</name>
    <dbReference type="NCBI Taxonomy" id="9031"/>
    <lineage>
        <taxon>Eukaryota</taxon>
        <taxon>Metazoa</taxon>
        <taxon>Chordata</taxon>
        <taxon>Craniata</taxon>
        <taxon>Vertebrata</taxon>
        <taxon>Euteleostomi</taxon>
        <taxon>Archelosauria</taxon>
        <taxon>Archosauria</taxon>
        <taxon>Dinosauria</taxon>
        <taxon>Saurischia</taxon>
        <taxon>Theropoda</taxon>
        <taxon>Coelurosauria</taxon>
        <taxon>Aves</taxon>
        <taxon>Neognathae</taxon>
        <taxon>Galloanserae</taxon>
        <taxon>Galliformes</taxon>
        <taxon>Phasianidae</taxon>
        <taxon>Phasianinae</taxon>
        <taxon>Gallus</taxon>
    </lineage>
</organism>
<evidence type="ECO:0000269" key="1">
    <source>
    </source>
</evidence>
<evidence type="ECO:0000269" key="2">
    <source>
    </source>
</evidence>
<evidence type="ECO:0000269" key="3">
    <source>
    </source>
</evidence>
<evidence type="ECO:0000305" key="4"/>
<evidence type="ECO:0007829" key="5">
    <source>
        <dbReference type="PDB" id="6HCE"/>
    </source>
</evidence>
<name>RBP_CHICK</name>
<proteinExistence type="evidence at protein level"/>
<accession>P02752</accession>
<accession>Q7T3Y1</accession>
<keyword id="KW-0002">3D-structure</keyword>
<keyword id="KW-0903">Direct protein sequencing</keyword>
<keyword id="KW-1015">Disulfide bond</keyword>
<keyword id="KW-0325">Glycoprotein</keyword>
<keyword id="KW-0597">Phosphoprotein</keyword>
<keyword id="KW-0873">Pyrrolidone carboxylic acid</keyword>
<keyword id="KW-1185">Reference proteome</keyword>
<keyword id="KW-0732">Signal</keyword>
<keyword id="KW-0813">Transport</keyword>
<comment type="function">
    <text>Required for the transport of riboflavin to the developing oocyte.</text>
</comment>
<comment type="tissue specificity">
    <text>Yolk RBP is synthesized in the liver; egg-white RBP is synthesized in the oviduct.</text>
</comment>
<comment type="PTM">
    <text>Plasma and yolk RBPS have the same carbohydrate components, whereas egg-white RBP has a different, ovomucoid-type carbohydrate chain.</text>
</comment>
<comment type="PTM">
    <text>Plasma RBP has the same C-terminal sequence as the egg-white RBP, which suggests that the C-terminal residues are cleaved off upon incorporation into the oocyte.</text>
</comment>
<comment type="similarity">
    <text evidence="4">Belongs to the folate receptor family.</text>
</comment>
<comment type="sequence caution" evidence="4">
    <conflict type="erroneous initiation">
        <sequence resource="EMBL-CDS" id="CAD44564"/>
    </conflict>
</comment>
<protein>
    <recommendedName>
        <fullName>Riboflavin-binding protein</fullName>
        <shortName>RBP</shortName>
    </recommendedName>
    <component>
        <recommendedName>
            <fullName>Riboflavin-binding protein, plasma form</fullName>
        </recommendedName>
    </component>
    <component>
        <recommendedName>
            <fullName>Riboflavin-binding protein, yolk major form</fullName>
        </recommendedName>
    </component>
    <component>
        <recommendedName>
            <fullName>Riboflavin-binding protein, yolk minor form</fullName>
        </recommendedName>
    </component>
</protein>
<sequence length="238" mass="27211">MLRFAITLFAVITSSTCQQYGCLEGDTHKANPSPEPNMHECTLYSESSCCYANFTEQLAHSPIIKVSNSYWNRCGQLSKSCEDFTKKIECFYRCSPHAARWIDPRYTAAIQSVPLCQSFCDDWYEACKDDSICAHNWLTDWERDESGENHCKSKCVPYSEMYANGTDMCQSMWGESFKVSESSCLCLQMNKKDMVAIKHLLSESSEESSSMSSSEEHACQKKLLKFEALQQEEGEERR</sequence>